<gene>
    <name evidence="1" type="primary">rsmH</name>
    <name type="synonym">mraW</name>
    <name type="ordered locus">UTI89_C0091</name>
</gene>
<protein>
    <recommendedName>
        <fullName evidence="1">Ribosomal RNA small subunit methyltransferase H</fullName>
        <ecNumber evidence="1">2.1.1.199</ecNumber>
    </recommendedName>
    <alternativeName>
        <fullName evidence="1">16S rRNA m(4)C1402 methyltransferase</fullName>
    </alternativeName>
    <alternativeName>
        <fullName evidence="1">rRNA (cytosine-N(4)-)-methyltransferase RsmH</fullName>
    </alternativeName>
</protein>
<name>RSMH_ECOUT</name>
<keyword id="KW-0963">Cytoplasm</keyword>
<keyword id="KW-0489">Methyltransferase</keyword>
<keyword id="KW-0698">rRNA processing</keyword>
<keyword id="KW-0949">S-adenosyl-L-methionine</keyword>
<keyword id="KW-0808">Transferase</keyword>
<accession>Q1RGB3</accession>
<evidence type="ECO:0000255" key="1">
    <source>
        <dbReference type="HAMAP-Rule" id="MF_01007"/>
    </source>
</evidence>
<proteinExistence type="inferred from homology"/>
<sequence>MMENYKHTTVLLDEAVNGLNIRPDGIYIDGTFGRGGHSRLILSQLGEEGRLLAIDRDPQAIAVAKTIDDPRFSIIHGPFSALGEYVAERDLIGKIDGILLDLGVSSPQLDDAERGFSFMRDGPLDMRMDPTRGQSAAEWLQTAEEADIAWVLKTYGEERFAKRIARAIVERNREQPMTRTKELAEVVAAATPVKDKFKHPATRTFQAVRIWVNSELEEIEQALKSSLNVLAPGGRLSIISFHSLEDRIVKRFMRENSRGPQVPAGLPMTEEQLKKLGGRQLRALGKLMPGEEEVAENPRARSSVLRIAERTNA</sequence>
<dbReference type="EC" id="2.1.1.199" evidence="1"/>
<dbReference type="EMBL" id="CP000243">
    <property type="protein sequence ID" value="ABE05601.1"/>
    <property type="molecule type" value="Genomic_DNA"/>
</dbReference>
<dbReference type="RefSeq" id="WP_000970479.1">
    <property type="nucleotide sequence ID" value="NZ_CP064825.1"/>
</dbReference>
<dbReference type="SMR" id="Q1RGB3"/>
<dbReference type="GeneID" id="86862592"/>
<dbReference type="KEGG" id="eci:UTI89_C0091"/>
<dbReference type="HOGENOM" id="CLU_038422_2_0_6"/>
<dbReference type="Proteomes" id="UP000001952">
    <property type="component" value="Chromosome"/>
</dbReference>
<dbReference type="GO" id="GO:0005737">
    <property type="term" value="C:cytoplasm"/>
    <property type="evidence" value="ECO:0007669"/>
    <property type="project" value="UniProtKB-SubCell"/>
</dbReference>
<dbReference type="GO" id="GO:0071424">
    <property type="term" value="F:rRNA (cytosine-N4-)-methyltransferase activity"/>
    <property type="evidence" value="ECO:0007669"/>
    <property type="project" value="UniProtKB-UniRule"/>
</dbReference>
<dbReference type="GO" id="GO:0070475">
    <property type="term" value="P:rRNA base methylation"/>
    <property type="evidence" value="ECO:0007669"/>
    <property type="project" value="UniProtKB-UniRule"/>
</dbReference>
<dbReference type="FunFam" id="1.10.150.170:FF:000001">
    <property type="entry name" value="Ribosomal RNA small subunit methyltransferase H"/>
    <property type="match status" value="1"/>
</dbReference>
<dbReference type="Gene3D" id="1.10.150.170">
    <property type="entry name" value="Putative methyltransferase TM0872, insert domain"/>
    <property type="match status" value="1"/>
</dbReference>
<dbReference type="Gene3D" id="3.40.50.150">
    <property type="entry name" value="Vaccinia Virus protein VP39"/>
    <property type="match status" value="1"/>
</dbReference>
<dbReference type="HAMAP" id="MF_01007">
    <property type="entry name" value="16SrRNA_methyltr_H"/>
    <property type="match status" value="1"/>
</dbReference>
<dbReference type="InterPro" id="IPR002903">
    <property type="entry name" value="RsmH"/>
</dbReference>
<dbReference type="InterPro" id="IPR023397">
    <property type="entry name" value="SAM-dep_MeTrfase_MraW_recog"/>
</dbReference>
<dbReference type="InterPro" id="IPR029063">
    <property type="entry name" value="SAM-dependent_MTases_sf"/>
</dbReference>
<dbReference type="NCBIfam" id="TIGR00006">
    <property type="entry name" value="16S rRNA (cytosine(1402)-N(4))-methyltransferase RsmH"/>
    <property type="match status" value="1"/>
</dbReference>
<dbReference type="PANTHER" id="PTHR11265:SF0">
    <property type="entry name" value="12S RRNA N4-METHYLCYTIDINE METHYLTRANSFERASE"/>
    <property type="match status" value="1"/>
</dbReference>
<dbReference type="PANTHER" id="PTHR11265">
    <property type="entry name" value="S-ADENOSYL-METHYLTRANSFERASE MRAW"/>
    <property type="match status" value="1"/>
</dbReference>
<dbReference type="Pfam" id="PF01795">
    <property type="entry name" value="Methyltransf_5"/>
    <property type="match status" value="1"/>
</dbReference>
<dbReference type="PIRSF" id="PIRSF004486">
    <property type="entry name" value="MraW"/>
    <property type="match status" value="1"/>
</dbReference>
<dbReference type="SUPFAM" id="SSF81799">
    <property type="entry name" value="Putative methyltransferase TM0872, insert domain"/>
    <property type="match status" value="1"/>
</dbReference>
<dbReference type="SUPFAM" id="SSF53335">
    <property type="entry name" value="S-adenosyl-L-methionine-dependent methyltransferases"/>
    <property type="match status" value="1"/>
</dbReference>
<organism>
    <name type="scientific">Escherichia coli (strain UTI89 / UPEC)</name>
    <dbReference type="NCBI Taxonomy" id="364106"/>
    <lineage>
        <taxon>Bacteria</taxon>
        <taxon>Pseudomonadati</taxon>
        <taxon>Pseudomonadota</taxon>
        <taxon>Gammaproteobacteria</taxon>
        <taxon>Enterobacterales</taxon>
        <taxon>Enterobacteriaceae</taxon>
        <taxon>Escherichia</taxon>
    </lineage>
</organism>
<feature type="chain" id="PRO_0000386875" description="Ribosomal RNA small subunit methyltransferase H">
    <location>
        <begin position="1"/>
        <end position="313"/>
    </location>
</feature>
<feature type="binding site" evidence="1">
    <location>
        <begin position="35"/>
        <end position="37"/>
    </location>
    <ligand>
        <name>S-adenosyl-L-methionine</name>
        <dbReference type="ChEBI" id="CHEBI:59789"/>
    </ligand>
</feature>
<feature type="binding site" evidence="1">
    <location>
        <position position="55"/>
    </location>
    <ligand>
        <name>S-adenosyl-L-methionine</name>
        <dbReference type="ChEBI" id="CHEBI:59789"/>
    </ligand>
</feature>
<feature type="binding site" evidence="1">
    <location>
        <position position="79"/>
    </location>
    <ligand>
        <name>S-adenosyl-L-methionine</name>
        <dbReference type="ChEBI" id="CHEBI:59789"/>
    </ligand>
</feature>
<feature type="binding site" evidence="1">
    <location>
        <position position="101"/>
    </location>
    <ligand>
        <name>S-adenosyl-L-methionine</name>
        <dbReference type="ChEBI" id="CHEBI:59789"/>
    </ligand>
</feature>
<feature type="binding site" evidence="1">
    <location>
        <position position="108"/>
    </location>
    <ligand>
        <name>S-adenosyl-L-methionine</name>
        <dbReference type="ChEBI" id="CHEBI:59789"/>
    </ligand>
</feature>
<reference key="1">
    <citation type="journal article" date="2006" name="Proc. Natl. Acad. Sci. U.S.A.">
        <title>Identification of genes subject to positive selection in uropathogenic strains of Escherichia coli: a comparative genomics approach.</title>
        <authorList>
            <person name="Chen S.L."/>
            <person name="Hung C.-S."/>
            <person name="Xu J."/>
            <person name="Reigstad C.S."/>
            <person name="Magrini V."/>
            <person name="Sabo A."/>
            <person name="Blasiar D."/>
            <person name="Bieri T."/>
            <person name="Meyer R.R."/>
            <person name="Ozersky P."/>
            <person name="Armstrong J.R."/>
            <person name="Fulton R.S."/>
            <person name="Latreille J.P."/>
            <person name="Spieth J."/>
            <person name="Hooton T.M."/>
            <person name="Mardis E.R."/>
            <person name="Hultgren S.J."/>
            <person name="Gordon J.I."/>
        </authorList>
    </citation>
    <scope>NUCLEOTIDE SEQUENCE [LARGE SCALE GENOMIC DNA]</scope>
    <source>
        <strain>UTI89 / UPEC</strain>
    </source>
</reference>
<comment type="function">
    <text evidence="1">Specifically methylates the N4 position of cytidine in position 1402 (C1402) of 16S rRNA.</text>
</comment>
<comment type="catalytic activity">
    <reaction evidence="1">
        <text>cytidine(1402) in 16S rRNA + S-adenosyl-L-methionine = N(4)-methylcytidine(1402) in 16S rRNA + S-adenosyl-L-homocysteine + H(+)</text>
        <dbReference type="Rhea" id="RHEA:42928"/>
        <dbReference type="Rhea" id="RHEA-COMP:10286"/>
        <dbReference type="Rhea" id="RHEA-COMP:10287"/>
        <dbReference type="ChEBI" id="CHEBI:15378"/>
        <dbReference type="ChEBI" id="CHEBI:57856"/>
        <dbReference type="ChEBI" id="CHEBI:59789"/>
        <dbReference type="ChEBI" id="CHEBI:74506"/>
        <dbReference type="ChEBI" id="CHEBI:82748"/>
        <dbReference type="EC" id="2.1.1.199"/>
    </reaction>
</comment>
<comment type="subcellular location">
    <subcellularLocation>
        <location evidence="1">Cytoplasm</location>
    </subcellularLocation>
</comment>
<comment type="similarity">
    <text evidence="1">Belongs to the methyltransferase superfamily. RsmH family.</text>
</comment>